<protein>
    <recommendedName>
        <fullName>Protein UmuD</fullName>
        <ecNumber>3.4.21.-</ecNumber>
    </recommendedName>
    <component>
        <recommendedName>
            <fullName>Protein UmuD'</fullName>
        </recommendedName>
    </component>
</protein>
<feature type="chain" id="PRO_0000045247" description="Protein UmuD">
    <location>
        <begin position="1"/>
        <end position="139"/>
    </location>
</feature>
<feature type="chain" id="PRO_0000045249" description="Protein UmuD'">
    <location>
        <begin position="25"/>
        <end position="139"/>
    </location>
</feature>
<feature type="active site" description="For autocatalytic cleavage activity" evidence="1">
    <location>
        <position position="60"/>
    </location>
</feature>
<feature type="active site" description="For autocatalytic cleavage activity" evidence="1">
    <location>
        <position position="97"/>
    </location>
</feature>
<feature type="site" description="Cleavage; by autolysis" evidence="1">
    <location>
        <begin position="24"/>
        <end position="25"/>
    </location>
</feature>
<accession>P0AG13</accession>
<accession>P04153</accession>
<comment type="function">
    <text evidence="1">Involved in UV protection and mutation. Essential for induced (or SOS) mutagenesis. May modify the DNA replication machinery to allow bypass synthesis across a damaged template (By similarity).</text>
</comment>
<comment type="similarity">
    <text evidence="2">Belongs to the peptidase S24 family.</text>
</comment>
<sequence>MLFIKPADLREIVTFPLFSDLVQCGFPSPAADYVEQRIDLNQLLIQHPSATYFVKASGDSMIDGGISDGDLLIVDSAITASHGDIVIAAVDGEFTVKKLQLRPTVQLIPMNSAYSPITISSEDTLDVFGVVIHVVKAMR</sequence>
<dbReference type="EC" id="3.4.21.-"/>
<dbReference type="EMBL" id="AE005674">
    <property type="protein sequence ID" value="AAN42787.1"/>
    <property type="molecule type" value="Genomic_DNA"/>
</dbReference>
<dbReference type="EMBL" id="AE014073">
    <property type="protein sequence ID" value="AAP16678.1"/>
    <property type="molecule type" value="Genomic_DNA"/>
</dbReference>
<dbReference type="RefSeq" id="NP_707080.1">
    <property type="nucleotide sequence ID" value="NC_004337.2"/>
</dbReference>
<dbReference type="RefSeq" id="WP_000897378.1">
    <property type="nucleotide sequence ID" value="NZ_WPGW01000047.1"/>
</dbReference>
<dbReference type="BMRB" id="P0AG13"/>
<dbReference type="SMR" id="P0AG13"/>
<dbReference type="STRING" id="198214.SF1172"/>
<dbReference type="MEROPS" id="S24.003"/>
<dbReference type="PaxDb" id="198214-SF1172"/>
<dbReference type="GeneID" id="1024107"/>
<dbReference type="KEGG" id="sfl:SF1172"/>
<dbReference type="KEGG" id="sfx:S1260"/>
<dbReference type="PATRIC" id="fig|198214.7.peg.1386"/>
<dbReference type="HOGENOM" id="CLU_066192_0_0_6"/>
<dbReference type="Proteomes" id="UP000001006">
    <property type="component" value="Chromosome"/>
</dbReference>
<dbReference type="Proteomes" id="UP000002673">
    <property type="component" value="Chromosome"/>
</dbReference>
<dbReference type="GO" id="GO:0003677">
    <property type="term" value="F:DNA binding"/>
    <property type="evidence" value="ECO:0007669"/>
    <property type="project" value="InterPro"/>
</dbReference>
<dbReference type="GO" id="GO:0008236">
    <property type="term" value="F:serine-type peptidase activity"/>
    <property type="evidence" value="ECO:0007669"/>
    <property type="project" value="UniProtKB-KW"/>
</dbReference>
<dbReference type="GO" id="GO:0006281">
    <property type="term" value="P:DNA repair"/>
    <property type="evidence" value="ECO:0007669"/>
    <property type="project" value="UniProtKB-KW"/>
</dbReference>
<dbReference type="GO" id="GO:0006508">
    <property type="term" value="P:proteolysis"/>
    <property type="evidence" value="ECO:0007669"/>
    <property type="project" value="UniProtKB-KW"/>
</dbReference>
<dbReference type="GO" id="GO:0006355">
    <property type="term" value="P:regulation of DNA-templated transcription"/>
    <property type="evidence" value="ECO:0007669"/>
    <property type="project" value="InterPro"/>
</dbReference>
<dbReference type="GO" id="GO:0009432">
    <property type="term" value="P:SOS response"/>
    <property type="evidence" value="ECO:0007669"/>
    <property type="project" value="UniProtKB-KW"/>
</dbReference>
<dbReference type="CDD" id="cd06529">
    <property type="entry name" value="S24_LexA-like"/>
    <property type="match status" value="1"/>
</dbReference>
<dbReference type="Gene3D" id="2.10.109.10">
    <property type="entry name" value="Umud Fragment, subunit A"/>
    <property type="match status" value="1"/>
</dbReference>
<dbReference type="InterPro" id="IPR039418">
    <property type="entry name" value="LexA-like"/>
</dbReference>
<dbReference type="InterPro" id="IPR036286">
    <property type="entry name" value="LexA/Signal_pep-like_sf"/>
</dbReference>
<dbReference type="InterPro" id="IPR050077">
    <property type="entry name" value="LexA_repressor"/>
</dbReference>
<dbReference type="InterPro" id="IPR006197">
    <property type="entry name" value="Peptidase_S24_LexA"/>
</dbReference>
<dbReference type="InterPro" id="IPR015927">
    <property type="entry name" value="Peptidase_S24_S26A/B/C"/>
</dbReference>
<dbReference type="NCBIfam" id="NF007621">
    <property type="entry name" value="PRK10276.1"/>
    <property type="match status" value="1"/>
</dbReference>
<dbReference type="PANTHER" id="PTHR33516">
    <property type="entry name" value="LEXA REPRESSOR"/>
    <property type="match status" value="1"/>
</dbReference>
<dbReference type="PANTHER" id="PTHR33516:SF2">
    <property type="entry name" value="LEXA REPRESSOR-RELATED"/>
    <property type="match status" value="1"/>
</dbReference>
<dbReference type="Pfam" id="PF00717">
    <property type="entry name" value="Peptidase_S24"/>
    <property type="match status" value="1"/>
</dbReference>
<dbReference type="PRINTS" id="PR00726">
    <property type="entry name" value="LEXASERPTASE"/>
</dbReference>
<dbReference type="SUPFAM" id="SSF51306">
    <property type="entry name" value="LexA/Signal peptidase"/>
    <property type="match status" value="1"/>
</dbReference>
<gene>
    <name type="primary">umuD</name>
    <name type="ordered locus">SF1172</name>
    <name type="ordered locus">S1260</name>
</gene>
<reference key="1">
    <citation type="journal article" date="2002" name="Nucleic Acids Res.">
        <title>Genome sequence of Shigella flexneri 2a: insights into pathogenicity through comparison with genomes of Escherichia coli K12 and O157.</title>
        <authorList>
            <person name="Jin Q."/>
            <person name="Yuan Z."/>
            <person name="Xu J."/>
            <person name="Wang Y."/>
            <person name="Shen Y."/>
            <person name="Lu W."/>
            <person name="Wang J."/>
            <person name="Liu H."/>
            <person name="Yang J."/>
            <person name="Yang F."/>
            <person name="Zhang X."/>
            <person name="Zhang J."/>
            <person name="Yang G."/>
            <person name="Wu H."/>
            <person name="Qu D."/>
            <person name="Dong J."/>
            <person name="Sun L."/>
            <person name="Xue Y."/>
            <person name="Zhao A."/>
            <person name="Gao Y."/>
            <person name="Zhu J."/>
            <person name="Kan B."/>
            <person name="Ding K."/>
            <person name="Chen S."/>
            <person name="Cheng H."/>
            <person name="Yao Z."/>
            <person name="He B."/>
            <person name="Chen R."/>
            <person name="Ma D."/>
            <person name="Qiang B."/>
            <person name="Wen Y."/>
            <person name="Hou Y."/>
            <person name="Yu J."/>
        </authorList>
    </citation>
    <scope>NUCLEOTIDE SEQUENCE [LARGE SCALE GENOMIC DNA]</scope>
    <source>
        <strain>301 / Serotype 2a</strain>
    </source>
</reference>
<reference key="2">
    <citation type="journal article" date="2003" name="Infect. Immun.">
        <title>Complete genome sequence and comparative genomics of Shigella flexneri serotype 2a strain 2457T.</title>
        <authorList>
            <person name="Wei J."/>
            <person name="Goldberg M.B."/>
            <person name="Burland V."/>
            <person name="Venkatesan M.M."/>
            <person name="Deng W."/>
            <person name="Fournier G."/>
            <person name="Mayhew G.F."/>
            <person name="Plunkett G. III"/>
            <person name="Rose D.J."/>
            <person name="Darling A."/>
            <person name="Mau B."/>
            <person name="Perna N.T."/>
            <person name="Payne S.M."/>
            <person name="Runyen-Janecky L.J."/>
            <person name="Zhou S."/>
            <person name="Schwartz D.C."/>
            <person name="Blattner F.R."/>
        </authorList>
    </citation>
    <scope>NUCLEOTIDE SEQUENCE [LARGE SCALE GENOMIC DNA]</scope>
    <source>
        <strain>ATCC 700930 / 2457T / Serotype 2a</strain>
    </source>
</reference>
<name>UMUD_SHIFL</name>
<organism>
    <name type="scientific">Shigella flexneri</name>
    <dbReference type="NCBI Taxonomy" id="623"/>
    <lineage>
        <taxon>Bacteria</taxon>
        <taxon>Pseudomonadati</taxon>
        <taxon>Pseudomonadota</taxon>
        <taxon>Gammaproteobacteria</taxon>
        <taxon>Enterobacterales</taxon>
        <taxon>Enterobacteriaceae</taxon>
        <taxon>Shigella</taxon>
    </lineage>
</organism>
<proteinExistence type="inferred from homology"/>
<keyword id="KW-0068">Autocatalytic cleavage</keyword>
<keyword id="KW-0227">DNA damage</keyword>
<keyword id="KW-0234">DNA repair</keyword>
<keyword id="KW-0378">Hydrolase</keyword>
<keyword id="KW-0645">Protease</keyword>
<keyword id="KW-1185">Reference proteome</keyword>
<keyword id="KW-0720">Serine protease</keyword>
<keyword id="KW-0741">SOS mutagenesis</keyword>
<keyword id="KW-0742">SOS response</keyword>
<evidence type="ECO:0000250" key="1"/>
<evidence type="ECO:0000305" key="2"/>